<sequence>MTDKPEINDEVEKLISSIEEKNRLEAERKANKLLSKNKRELNRLYKHAQIAAENNNFAQYEYAIKKSRDILKQPYNDELISILWKTTRSQIEDMIDAYTRKIQAS</sequence>
<keyword id="KW-1185">Reference proteome</keyword>
<feature type="chain" id="PRO_0000165102" description="Uncharacterized 12.4 kDa protein in mobB-Gp55 intergenic region">
    <location>
        <begin position="1"/>
        <end position="105"/>
    </location>
</feature>
<proteinExistence type="predicted"/>
<gene>
    <name type="primary">y03H</name>
    <name type="synonym">agt.4</name>
</gene>
<protein>
    <recommendedName>
        <fullName>Uncharacterized 12.4 kDa protein in mobB-Gp55 intergenic region</fullName>
    </recommendedName>
    <alternativeName>
        <fullName>ORF A</fullName>
    </alternativeName>
</protein>
<name>Y03H_BPT4</name>
<accession>P13326</accession>
<organismHost>
    <name type="scientific">Escherichia coli</name>
    <dbReference type="NCBI Taxonomy" id="562"/>
</organismHost>
<organism>
    <name type="scientific">Enterobacteria phage T4</name>
    <name type="common">Bacteriophage T4</name>
    <dbReference type="NCBI Taxonomy" id="10665"/>
    <lineage>
        <taxon>Viruses</taxon>
        <taxon>Duplodnaviria</taxon>
        <taxon>Heunggongvirae</taxon>
        <taxon>Uroviricota</taxon>
        <taxon>Caudoviricetes</taxon>
        <taxon>Straboviridae</taxon>
        <taxon>Tevenvirinae</taxon>
        <taxon>Tequatrovirus</taxon>
    </lineage>
</organism>
<dbReference type="EMBL" id="X01804">
    <property type="protein sequence ID" value="CAA25935.1"/>
    <property type="molecule type" value="Genomic_DNA"/>
</dbReference>
<dbReference type="EMBL" id="AF158101">
    <property type="protein sequence ID" value="AAD42530.1"/>
    <property type="molecule type" value="Genomic_DNA"/>
</dbReference>
<dbReference type="PIR" id="T10152">
    <property type="entry name" value="T10152"/>
</dbReference>
<dbReference type="SMR" id="P13326"/>
<dbReference type="KEGG" id="vg:1258814"/>
<dbReference type="OrthoDB" id="17010at10239"/>
<dbReference type="Proteomes" id="UP000009087">
    <property type="component" value="Segment"/>
</dbReference>
<dbReference type="InterPro" id="IPR022558">
    <property type="entry name" value="DUF2654"/>
</dbReference>
<dbReference type="Pfam" id="PF10849">
    <property type="entry name" value="DUF2654"/>
    <property type="match status" value="1"/>
</dbReference>
<reference key="1">
    <citation type="journal article" date="1985" name="EMBO J.">
        <title>Genes 55, alpha gt, 47 and 46 of bacteriophage T4: the genomic organization as deduced by sequence analysis.</title>
        <authorList>
            <person name="Gram H."/>
            <person name="Rueger W."/>
        </authorList>
    </citation>
    <scope>NUCLEOTIDE SEQUENCE [GENOMIC DNA]</scope>
</reference>
<reference key="2">
    <citation type="journal article" date="2003" name="Microbiol. Mol. Biol. Rev.">
        <title>Bacteriophage T4 genome.</title>
        <authorList>
            <person name="Miller E.S."/>
            <person name="Kutter E."/>
            <person name="Mosig G."/>
            <person name="Arisaka F."/>
            <person name="Kunisawa T."/>
            <person name="Ruger W."/>
        </authorList>
    </citation>
    <scope>NUCLEOTIDE SEQUENCE [LARGE SCALE GENOMIC DNA]</scope>
</reference>